<proteinExistence type="inferred from homology"/>
<feature type="chain" id="PRO_0000175834" description="Probable transcriptional regulatory protein lin0388">
    <location>
        <begin position="1"/>
        <end position="239"/>
    </location>
</feature>
<evidence type="ECO:0000255" key="1">
    <source>
        <dbReference type="HAMAP-Rule" id="MF_00918"/>
    </source>
</evidence>
<reference key="1">
    <citation type="journal article" date="2001" name="Science">
        <title>Comparative genomics of Listeria species.</title>
        <authorList>
            <person name="Glaser P."/>
            <person name="Frangeul L."/>
            <person name="Buchrieser C."/>
            <person name="Rusniok C."/>
            <person name="Amend A."/>
            <person name="Baquero F."/>
            <person name="Berche P."/>
            <person name="Bloecker H."/>
            <person name="Brandt P."/>
            <person name="Chakraborty T."/>
            <person name="Charbit A."/>
            <person name="Chetouani F."/>
            <person name="Couve E."/>
            <person name="de Daruvar A."/>
            <person name="Dehoux P."/>
            <person name="Domann E."/>
            <person name="Dominguez-Bernal G."/>
            <person name="Duchaud E."/>
            <person name="Durant L."/>
            <person name="Dussurget O."/>
            <person name="Entian K.-D."/>
            <person name="Fsihi H."/>
            <person name="Garcia-del Portillo F."/>
            <person name="Garrido P."/>
            <person name="Gautier L."/>
            <person name="Goebel W."/>
            <person name="Gomez-Lopez N."/>
            <person name="Hain T."/>
            <person name="Hauf J."/>
            <person name="Jackson D."/>
            <person name="Jones L.-M."/>
            <person name="Kaerst U."/>
            <person name="Kreft J."/>
            <person name="Kuhn M."/>
            <person name="Kunst F."/>
            <person name="Kurapkat G."/>
            <person name="Madueno E."/>
            <person name="Maitournam A."/>
            <person name="Mata Vicente J."/>
            <person name="Ng E."/>
            <person name="Nedjari H."/>
            <person name="Nordsiek G."/>
            <person name="Novella S."/>
            <person name="de Pablos B."/>
            <person name="Perez-Diaz J.-C."/>
            <person name="Purcell R."/>
            <person name="Remmel B."/>
            <person name="Rose M."/>
            <person name="Schlueter T."/>
            <person name="Simoes N."/>
            <person name="Tierrez A."/>
            <person name="Vazquez-Boland J.-A."/>
            <person name="Voss H."/>
            <person name="Wehland J."/>
            <person name="Cossart P."/>
        </authorList>
    </citation>
    <scope>NUCLEOTIDE SEQUENCE [LARGE SCALE GENOMIC DNA]</scope>
    <source>
        <strain>ATCC BAA-680 / CLIP 11262</strain>
    </source>
</reference>
<name>Y388_LISIN</name>
<sequence length="239" mass="26684">MGRKWANIKEKKASKDKTNSRIYAKFGIEIYVAAKSGDPDPHSNQKLRFVIERAKTYNVPKHIIDRAIEKAKGTGDETYSELRYEGFGPNGSMIIVDALTNNVNRTASDVRAAYSKNGGNMGVSGSVAYMFDNTAIFGVEGKDADELLELLMEADIDVRDILDEDGQAIIYAEPEDFHKVQEGLKAAGIEEFTVAEIEMIPQNDIQLSGEDLEKFEKLIDALEDLEDVQKVYHNVELED</sequence>
<keyword id="KW-0963">Cytoplasm</keyword>
<keyword id="KW-0238">DNA-binding</keyword>
<keyword id="KW-0804">Transcription</keyword>
<keyword id="KW-0805">Transcription regulation</keyword>
<accession>Q92ES0</accession>
<organism>
    <name type="scientific">Listeria innocua serovar 6a (strain ATCC BAA-680 / CLIP 11262)</name>
    <dbReference type="NCBI Taxonomy" id="272626"/>
    <lineage>
        <taxon>Bacteria</taxon>
        <taxon>Bacillati</taxon>
        <taxon>Bacillota</taxon>
        <taxon>Bacilli</taxon>
        <taxon>Bacillales</taxon>
        <taxon>Listeriaceae</taxon>
        <taxon>Listeria</taxon>
    </lineage>
</organism>
<gene>
    <name type="ordered locus">lin0388</name>
</gene>
<protein>
    <recommendedName>
        <fullName evidence="1">Probable transcriptional regulatory protein lin0388</fullName>
    </recommendedName>
</protein>
<comment type="subcellular location">
    <subcellularLocation>
        <location evidence="1">Cytoplasm</location>
    </subcellularLocation>
</comment>
<comment type="similarity">
    <text evidence="1">Belongs to the TACO1 family. YeeN subfamily.</text>
</comment>
<dbReference type="EMBL" id="AL596164">
    <property type="protein sequence ID" value="CAC95621.1"/>
    <property type="molecule type" value="Genomic_DNA"/>
</dbReference>
<dbReference type="PIR" id="AE1481">
    <property type="entry name" value="AE1481"/>
</dbReference>
<dbReference type="RefSeq" id="WP_003723220.1">
    <property type="nucleotide sequence ID" value="NC_003212.1"/>
</dbReference>
<dbReference type="SMR" id="Q92ES0"/>
<dbReference type="STRING" id="272626.gene:17564715"/>
<dbReference type="KEGG" id="lin:lin0388"/>
<dbReference type="eggNOG" id="COG0217">
    <property type="taxonomic scope" value="Bacteria"/>
</dbReference>
<dbReference type="HOGENOM" id="CLU_062974_2_0_9"/>
<dbReference type="OrthoDB" id="9781053at2"/>
<dbReference type="Proteomes" id="UP000002513">
    <property type="component" value="Chromosome"/>
</dbReference>
<dbReference type="GO" id="GO:0005829">
    <property type="term" value="C:cytosol"/>
    <property type="evidence" value="ECO:0007669"/>
    <property type="project" value="TreeGrafter"/>
</dbReference>
<dbReference type="GO" id="GO:0003677">
    <property type="term" value="F:DNA binding"/>
    <property type="evidence" value="ECO:0007669"/>
    <property type="project" value="UniProtKB-UniRule"/>
</dbReference>
<dbReference type="GO" id="GO:0006355">
    <property type="term" value="P:regulation of DNA-templated transcription"/>
    <property type="evidence" value="ECO:0007669"/>
    <property type="project" value="UniProtKB-UniRule"/>
</dbReference>
<dbReference type="FunFam" id="1.10.10.200:FF:000003">
    <property type="entry name" value="Probable transcriptional regulatory protein YeeN"/>
    <property type="match status" value="1"/>
</dbReference>
<dbReference type="FunFam" id="3.30.70.980:FF:000004">
    <property type="entry name" value="Probable transcriptional regulatory protein YeeN"/>
    <property type="match status" value="1"/>
</dbReference>
<dbReference type="Gene3D" id="1.10.10.200">
    <property type="match status" value="1"/>
</dbReference>
<dbReference type="Gene3D" id="3.30.70.980">
    <property type="match status" value="2"/>
</dbReference>
<dbReference type="HAMAP" id="MF_00693">
    <property type="entry name" value="Transcrip_reg_TACO1"/>
    <property type="match status" value="1"/>
</dbReference>
<dbReference type="HAMAP" id="MF_00918">
    <property type="entry name" value="Transcrip_reg_TACO1_YeeN"/>
    <property type="match status" value="1"/>
</dbReference>
<dbReference type="InterPro" id="IPR017856">
    <property type="entry name" value="Integrase-like_N"/>
</dbReference>
<dbReference type="InterPro" id="IPR048300">
    <property type="entry name" value="TACO1_YebC-like_2nd/3rd_dom"/>
</dbReference>
<dbReference type="InterPro" id="IPR049083">
    <property type="entry name" value="TACO1_YebC_N"/>
</dbReference>
<dbReference type="InterPro" id="IPR002876">
    <property type="entry name" value="Transcrip_reg_TACO1-like"/>
</dbReference>
<dbReference type="InterPro" id="IPR026564">
    <property type="entry name" value="Transcrip_reg_TACO1-like_dom3"/>
</dbReference>
<dbReference type="InterPro" id="IPR026562">
    <property type="entry name" value="Transcrip_reg_TACO1_YeeN"/>
</dbReference>
<dbReference type="InterPro" id="IPR029072">
    <property type="entry name" value="YebC-like"/>
</dbReference>
<dbReference type="NCBIfam" id="NF001030">
    <property type="entry name" value="PRK00110.1"/>
    <property type="match status" value="1"/>
</dbReference>
<dbReference type="NCBIfam" id="NF009044">
    <property type="entry name" value="PRK12378.1"/>
    <property type="match status" value="1"/>
</dbReference>
<dbReference type="NCBIfam" id="TIGR01033">
    <property type="entry name" value="YebC/PmpR family DNA-binding transcriptional regulator"/>
    <property type="match status" value="1"/>
</dbReference>
<dbReference type="PANTHER" id="PTHR12532">
    <property type="entry name" value="TRANSLATIONAL ACTIVATOR OF CYTOCHROME C OXIDASE 1"/>
    <property type="match status" value="1"/>
</dbReference>
<dbReference type="PANTHER" id="PTHR12532:SF0">
    <property type="entry name" value="TRANSLATIONAL ACTIVATOR OF CYTOCHROME C OXIDASE 1"/>
    <property type="match status" value="1"/>
</dbReference>
<dbReference type="Pfam" id="PF20772">
    <property type="entry name" value="TACO1_YebC_N"/>
    <property type="match status" value="1"/>
</dbReference>
<dbReference type="Pfam" id="PF01709">
    <property type="entry name" value="Transcrip_reg"/>
    <property type="match status" value="1"/>
</dbReference>
<dbReference type="SUPFAM" id="SSF75625">
    <property type="entry name" value="YebC-like"/>
    <property type="match status" value="1"/>
</dbReference>